<reference key="1">
    <citation type="journal article" date="1999" name="Science">
        <title>Genome sequence of the radioresistant bacterium Deinococcus radiodurans R1.</title>
        <authorList>
            <person name="White O."/>
            <person name="Eisen J.A."/>
            <person name="Heidelberg J.F."/>
            <person name="Hickey E.K."/>
            <person name="Peterson J.D."/>
            <person name="Dodson R.J."/>
            <person name="Haft D.H."/>
            <person name="Gwinn M.L."/>
            <person name="Nelson W.C."/>
            <person name="Richardson D.L."/>
            <person name="Moffat K.S."/>
            <person name="Qin H."/>
            <person name="Jiang L."/>
            <person name="Pamphile W."/>
            <person name="Crosby M."/>
            <person name="Shen M."/>
            <person name="Vamathevan J.J."/>
            <person name="Lam P."/>
            <person name="McDonald L.A."/>
            <person name="Utterback T.R."/>
            <person name="Zalewski C."/>
            <person name="Makarova K.S."/>
            <person name="Aravind L."/>
            <person name="Daly M.J."/>
            <person name="Minton K.W."/>
            <person name="Fleischmann R.D."/>
            <person name="Ketchum K.A."/>
            <person name="Nelson K.E."/>
            <person name="Salzberg S.L."/>
            <person name="Smith H.O."/>
            <person name="Venter J.C."/>
            <person name="Fraser C.M."/>
        </authorList>
    </citation>
    <scope>NUCLEOTIDE SEQUENCE [LARGE SCALE GENOMIC DNA]</scope>
    <source>
        <strain>ATCC 13939 / DSM 20539 / JCM 16871 / CCUG 27074 / LMG 4051 / NBRC 15346 / NCIMB 9279 / VKM B-1422 / R1</strain>
    </source>
</reference>
<reference key="2">
    <citation type="journal article" date="2001" name="Cell">
        <title>High resolution structure of the large ribosomal subunit from a mesophilic eubacterium.</title>
        <authorList>
            <person name="Harms J."/>
            <person name="Schluenzen F."/>
            <person name="Zarivach R."/>
            <person name="Bashan A."/>
            <person name="Gat S."/>
            <person name="Agmon I."/>
            <person name="Bartels H."/>
            <person name="Franceschi F."/>
            <person name="Yonath A."/>
        </authorList>
    </citation>
    <scope>X-RAY CRYSTALLOGRAPHY (3.1 ANGSTROMS) OF THE 50S SUBUNIT</scope>
    <scope>PROTEIN SEQUENCE OF 1-5</scope>
    <source>
        <strain>ATCC 13939 / DSM 20539 / JCM 16871 / CCUG 27074 / LMG 4051 / NBRC 15346 / NCIMB 9279 / VKM B-1422 / R1</strain>
    </source>
</reference>
<reference key="3">
    <citation type="journal article" date="2001" name="Nature">
        <title>Structural basis for the interaction of antibiotics with the peptidyl transferase centre in eubacteria.</title>
        <authorList>
            <person name="Schluenzen F."/>
            <person name="Zarivach R."/>
            <person name="Harms J."/>
            <person name="Bashan A."/>
            <person name="Tocilj A."/>
            <person name="Albrecht R."/>
            <person name="Yonath A."/>
            <person name="Franceschi F."/>
        </authorList>
    </citation>
    <scope>X-RAY CRYSTALLOGRAPHY (3.1 ANGSTROMS) OF THE 50S SUBUNIT IN COMPLEX WITH FIVE ANTIBIOTICS</scope>
    <source>
        <strain>ATCC 13939 / DSM 20539 / JCM 16871 / CCUG 27074 / LMG 4051 / NBRC 15346 / NCIMB 9279 / VKM B-1422 / R1</strain>
    </source>
</reference>
<reference key="4">
    <citation type="journal article" date="2003" name="Mol. Cell">
        <title>Structural basis of the ribosomal machinery for peptide bond formation, translocation, and nascent chain progression.</title>
        <authorList>
            <person name="Bashan A."/>
            <person name="Agmon I."/>
            <person name="Zarivach R."/>
            <person name="Schluenzen F."/>
            <person name="Harms J."/>
            <person name="Berisio R."/>
            <person name="Bartels H."/>
            <person name="Franceschi F."/>
            <person name="Auerbach T."/>
            <person name="Hansen H.A."/>
            <person name="Kossoy E."/>
            <person name="Kessler M."/>
            <person name="Yonath A."/>
        </authorList>
    </citation>
    <scope>X-RAY CRYSTALLOGRAPHY (3.5 ANGSTROMS) OF THE 50S SUBUNIT IN COMPLEX WITH TRNA MIMICS</scope>
    <source>
        <strain>ATCC 13939 / DSM 20539 / JCM 16871 / CCUG 27074 / LMG 4051 / NBRC 15346 / NCIMB 9279 / VKM B-1422 / R1</strain>
    </source>
</reference>
<reference key="5">
    <citation type="journal article" date="2003" name="Structure">
        <title>Structural basis for the antibiotic activity of ketolides and azalides.</title>
        <authorList>
            <person name="Schluenzen F."/>
            <person name="Harms J.M."/>
            <person name="Franceschi F."/>
            <person name="Hansen H.A."/>
            <person name="Bartels H."/>
            <person name="Zarivach R."/>
            <person name="Yonath A."/>
        </authorList>
    </citation>
    <scope>X-RAY CRYSTALLOGRAPHY (3.3 ANGSTROMS) OF THE 50S SUBUNIT IN COMPLEX WITH MODIFIED MACROLIDE ANTIBIOTICS</scope>
    <source>
        <strain>ATCC 13939 / DSM 20539 / JCM 16871 / CCUG 27074 / LMG 4051 / NBRC 15346 / NCIMB 9279 / VKM B-1422 / R1</strain>
    </source>
</reference>
<reference key="6">
    <citation type="journal article" date="2003" name="Nat. Struct. Biol.">
        <title>Structural insight into the role of the ribosomal tunnel in cellular regulation.</title>
        <authorList>
            <person name="Berisio R."/>
            <person name="Schluenzen F."/>
            <person name="Harms J."/>
            <person name="Bashan A."/>
            <person name="Auerbach T."/>
            <person name="Baram D."/>
            <person name="Yonath A."/>
        </authorList>
    </citation>
    <scope>X-RAY CRYSTALLOGRAPHY (3.4 ANGSTROMS) OF THE 50S SUBUNIT IN COMPLEX WITH TROLEANDOMYCIN</scope>
    <source>
        <strain>ATCC 13939 / DSM 20539 / JCM 16871 / CCUG 27074 / LMG 4051 / NBRC 15346 / NCIMB 9279 / VKM B-1422 / R1</strain>
    </source>
</reference>
<reference key="7">
    <citation type="journal article" date="2004" name="BMC Biol.">
        <title>Alterations at the peptidyl transferase centre of the ribosome induced by the synergistic action of the streptogramins dalfopristin and quinupristin.</title>
        <authorList>
            <person name="Harms J.M."/>
            <person name="Schluenzen F."/>
            <person name="Fucini P."/>
            <person name="Bartels H."/>
            <person name="Yonath A."/>
        </authorList>
    </citation>
    <scope>X-RAY CRYSTALLOGRAPHY (3.4 ANGSTROMS) OF THE 50S SUBUNIT IN COMPLEX WITH THE STREPTOGRAMINS QUINUPRISTIN AND DALFOPRISTIN</scope>
    <source>
        <strain>ATCC 13939 / DSM 20539 / JCM 16871 / CCUG 27074 / LMG 4051 / NBRC 15346 / NCIMB 9279 / VKM B-1422 / R1</strain>
    </source>
</reference>
<reference key="8">
    <citation type="journal article" date="2004" name="Mol. Microbiol.">
        <title>Inhibition of peptide bond formation by pleuromutilins: the structure of the 50S ribosomal subunit from Deinococcus radiodurans in complex with tiamulin.</title>
        <authorList>
            <person name="Schluenzen F."/>
            <person name="Pyetan E."/>
            <person name="Fucini P."/>
            <person name="Yonath A."/>
            <person name="Harms J.M."/>
        </authorList>
    </citation>
    <scope>X-RAY CRYSTALLOGRAPHY (3.5 ANGSTROMS) OF THE 50S SUBUNIT IN COMPLEX WITH TIAMULIN</scope>
    <source>
        <strain>ATCC 13939 / DSM 20539 / JCM 16871 / CCUG 27074 / LMG 4051 / NBRC 15346 / NCIMB 9279 / VKM B-1422 / R1</strain>
    </source>
</reference>
<protein>
    <recommendedName>
        <fullName evidence="8">Large ribosomal subunit protein uL5</fullName>
    </recommendedName>
    <alternativeName>
        <fullName>50S ribosomal protein L5</fullName>
    </alternativeName>
</protein>
<organism>
    <name type="scientific">Deinococcus radiodurans (strain ATCC 13939 / DSM 20539 / JCM 16871 / CCUG 27074 / LMG 4051 / NBRC 15346 / NCIMB 9279 / VKM B-1422 / R1)</name>
    <dbReference type="NCBI Taxonomy" id="243230"/>
    <lineage>
        <taxon>Bacteria</taxon>
        <taxon>Thermotogati</taxon>
        <taxon>Deinococcota</taxon>
        <taxon>Deinococci</taxon>
        <taxon>Deinococcales</taxon>
        <taxon>Deinococcaceae</taxon>
        <taxon>Deinococcus</taxon>
    </lineage>
</organism>
<proteinExistence type="evidence at protein level"/>
<gene>
    <name type="primary">rplE</name>
    <name type="ordered locus">DR_0323</name>
</gene>
<evidence type="ECO:0000250" key="1"/>
<evidence type="ECO:0000269" key="2">
    <source>
    </source>
</evidence>
<evidence type="ECO:0000269" key="3">
    <source>
    </source>
</evidence>
<evidence type="ECO:0000269" key="4">
    <source>
    </source>
</evidence>
<evidence type="ECO:0000269" key="5">
    <source>
    </source>
</evidence>
<evidence type="ECO:0000269" key="6">
    <source>
    </source>
</evidence>
<evidence type="ECO:0000269" key="7">
    <source>
    </source>
</evidence>
<evidence type="ECO:0000305" key="8"/>
<evidence type="ECO:0007829" key="9">
    <source>
        <dbReference type="PDB" id="2ZJR"/>
    </source>
</evidence>
<evidence type="ECO:0007829" key="10">
    <source>
        <dbReference type="PDB" id="3DLL"/>
    </source>
</evidence>
<evidence type="ECO:0007829" key="11">
    <source>
        <dbReference type="PDB" id="4IO9"/>
    </source>
</evidence>
<evidence type="ECO:0007829" key="12">
    <source>
        <dbReference type="PDB" id="5DM6"/>
    </source>
</evidence>
<evidence type="ECO:0007829" key="13">
    <source>
        <dbReference type="PDB" id="5DM7"/>
    </source>
</evidence>
<evidence type="ECO:0007829" key="14">
    <source>
        <dbReference type="PDB" id="5JVG"/>
    </source>
</evidence>
<evidence type="ECO:0007829" key="15">
    <source>
        <dbReference type="PDB" id="7A18"/>
    </source>
</evidence>
<feature type="chain" id="PRO_0000124923" description="Large ribosomal subunit protein uL5">
    <location>
        <begin position="1"/>
        <end position="180"/>
    </location>
</feature>
<feature type="helix" evidence="12">
    <location>
        <begin position="4"/>
        <end position="20"/>
    </location>
</feature>
<feature type="strand" evidence="12">
    <location>
        <begin position="25"/>
        <end position="28"/>
    </location>
</feature>
<feature type="strand" evidence="9">
    <location>
        <begin position="33"/>
        <end position="35"/>
    </location>
</feature>
<feature type="strand" evidence="13">
    <location>
        <begin position="36"/>
        <end position="38"/>
    </location>
</feature>
<feature type="strand" evidence="9">
    <location>
        <begin position="42"/>
        <end position="44"/>
    </location>
</feature>
<feature type="helix" evidence="12">
    <location>
        <begin position="47"/>
        <end position="61"/>
    </location>
</feature>
<feature type="strand" evidence="12">
    <location>
        <begin position="66"/>
        <end position="69"/>
    </location>
</feature>
<feature type="strand" evidence="12">
    <location>
        <begin position="76"/>
        <end position="78"/>
    </location>
</feature>
<feature type="strand" evidence="14">
    <location>
        <begin position="81"/>
        <end position="83"/>
    </location>
</feature>
<feature type="strand" evidence="12">
    <location>
        <begin position="84"/>
        <end position="89"/>
    </location>
</feature>
<feature type="strand" evidence="10">
    <location>
        <begin position="90"/>
        <end position="92"/>
    </location>
</feature>
<feature type="helix" evidence="12">
    <location>
        <begin position="93"/>
        <end position="106"/>
    </location>
</feature>
<feature type="turn" evidence="13">
    <location>
        <begin position="107"/>
        <end position="110"/>
    </location>
</feature>
<feature type="strand" evidence="13">
    <location>
        <begin position="111"/>
        <end position="113"/>
    </location>
</feature>
<feature type="strand" evidence="15">
    <location>
        <begin position="114"/>
        <end position="116"/>
    </location>
</feature>
<feature type="turn" evidence="12">
    <location>
        <begin position="124"/>
        <end position="126"/>
    </location>
</feature>
<feature type="strand" evidence="11">
    <location>
        <begin position="127"/>
        <end position="132"/>
    </location>
</feature>
<feature type="strand" evidence="12">
    <location>
        <begin position="134"/>
        <end position="137"/>
    </location>
</feature>
<feature type="strand" evidence="11">
    <location>
        <begin position="138"/>
        <end position="140"/>
    </location>
</feature>
<feature type="helix" evidence="12">
    <location>
        <begin position="143"/>
        <end position="145"/>
    </location>
</feature>
<feature type="strand" evidence="9">
    <location>
        <begin position="146"/>
        <end position="148"/>
    </location>
</feature>
<feature type="strand" evidence="12">
    <location>
        <begin position="156"/>
        <end position="158"/>
    </location>
</feature>
<feature type="helix" evidence="12">
    <location>
        <begin position="163"/>
        <end position="172"/>
    </location>
</feature>
<accession>Q9RXJ0</accession>
<sequence length="180" mass="20350">MQQLKTKYNDQVRPALMQQFGYSSVMAVPRIEKIVVNEGLGSSKEDSKAIDKAAKELALITLQKPIITKAKKSISNFKLRQGMPVGIKVTLRGERMYVFLEKLINIGLPRIRDFRGINPNAFDGRGNYNLGIKEQLIFPEITYDMVDKTRGMDITIVTTAKTDEEARALLQSMGLPFRKQ</sequence>
<dbReference type="EMBL" id="AE000513">
    <property type="protein sequence ID" value="AAF09904.1"/>
    <property type="molecule type" value="Genomic_DNA"/>
</dbReference>
<dbReference type="PIR" id="C75535">
    <property type="entry name" value="C75535"/>
</dbReference>
<dbReference type="RefSeq" id="NP_294046.1">
    <property type="nucleotide sequence ID" value="NC_001263.1"/>
</dbReference>
<dbReference type="RefSeq" id="WP_010886968.1">
    <property type="nucleotide sequence ID" value="NC_001263.1"/>
</dbReference>
<dbReference type="PDB" id="1NKW">
    <property type="method" value="X-ray"/>
    <property type="resolution" value="3.10 A"/>
    <property type="chains" value="D=1-180"/>
</dbReference>
<dbReference type="PDB" id="1NWX">
    <property type="method" value="X-ray"/>
    <property type="resolution" value="3.50 A"/>
    <property type="chains" value="D=1-180"/>
</dbReference>
<dbReference type="PDB" id="1NWY">
    <property type="method" value="X-ray"/>
    <property type="resolution" value="3.30 A"/>
    <property type="chains" value="D=1-180"/>
</dbReference>
<dbReference type="PDB" id="1SM1">
    <property type="method" value="X-ray"/>
    <property type="resolution" value="3.42 A"/>
    <property type="chains" value="D=1-180"/>
</dbReference>
<dbReference type="PDB" id="1XBP">
    <property type="method" value="X-ray"/>
    <property type="resolution" value="3.50 A"/>
    <property type="chains" value="D=1-180"/>
</dbReference>
<dbReference type="PDB" id="2ZJP">
    <property type="method" value="X-ray"/>
    <property type="resolution" value="3.70 A"/>
    <property type="chains" value="D=1-180"/>
</dbReference>
<dbReference type="PDB" id="2ZJQ">
    <property type="method" value="X-ray"/>
    <property type="resolution" value="3.30 A"/>
    <property type="chains" value="D=1-180"/>
</dbReference>
<dbReference type="PDB" id="2ZJR">
    <property type="method" value="X-ray"/>
    <property type="resolution" value="2.91 A"/>
    <property type="chains" value="D=1-180"/>
</dbReference>
<dbReference type="PDB" id="3CF5">
    <property type="method" value="X-ray"/>
    <property type="resolution" value="3.30 A"/>
    <property type="chains" value="D=1-180"/>
</dbReference>
<dbReference type="PDB" id="3DLL">
    <property type="method" value="X-ray"/>
    <property type="resolution" value="3.50 A"/>
    <property type="chains" value="D=1-180"/>
</dbReference>
<dbReference type="PDB" id="3PIO">
    <property type="method" value="X-ray"/>
    <property type="resolution" value="3.25 A"/>
    <property type="chains" value="D=1-180"/>
</dbReference>
<dbReference type="PDB" id="3PIP">
    <property type="method" value="X-ray"/>
    <property type="resolution" value="3.45 A"/>
    <property type="chains" value="D=1-180"/>
</dbReference>
<dbReference type="PDB" id="4IO9">
    <property type="method" value="X-ray"/>
    <property type="resolution" value="3.20 A"/>
    <property type="chains" value="D=1-180"/>
</dbReference>
<dbReference type="PDB" id="4IOA">
    <property type="method" value="X-ray"/>
    <property type="resolution" value="3.20 A"/>
    <property type="chains" value="D=1-180"/>
</dbReference>
<dbReference type="PDB" id="4IOC">
    <property type="method" value="X-ray"/>
    <property type="resolution" value="3.60 A"/>
    <property type="chains" value="D=1-180"/>
</dbReference>
<dbReference type="PDB" id="4U67">
    <property type="method" value="X-ray"/>
    <property type="resolution" value="3.65 A"/>
    <property type="chains" value="D=1-180"/>
</dbReference>
<dbReference type="PDB" id="4V49">
    <property type="method" value="X-ray"/>
    <property type="resolution" value="8.70 A"/>
    <property type="chains" value="D=2-179"/>
</dbReference>
<dbReference type="PDB" id="4V4A">
    <property type="method" value="X-ray"/>
    <property type="resolution" value="9.50 A"/>
    <property type="chains" value="D=2-179"/>
</dbReference>
<dbReference type="PDB" id="4V4G">
    <property type="method" value="X-ray"/>
    <property type="resolution" value="11.50 A"/>
    <property type="chains" value="G=2-179"/>
</dbReference>
<dbReference type="PDB" id="4WFN">
    <property type="method" value="X-ray"/>
    <property type="resolution" value="3.54 A"/>
    <property type="chains" value="D=1-180"/>
</dbReference>
<dbReference type="PDB" id="5DM6">
    <property type="method" value="X-ray"/>
    <property type="resolution" value="2.90 A"/>
    <property type="chains" value="D=3-179"/>
</dbReference>
<dbReference type="PDB" id="5DM7">
    <property type="method" value="X-ray"/>
    <property type="resolution" value="3.00 A"/>
    <property type="chains" value="D=3-179"/>
</dbReference>
<dbReference type="PDB" id="5JVG">
    <property type="method" value="X-ray"/>
    <property type="resolution" value="3.43 A"/>
    <property type="chains" value="D=1-180"/>
</dbReference>
<dbReference type="PDB" id="5JVH">
    <property type="method" value="X-ray"/>
    <property type="resolution" value="3.58 A"/>
    <property type="chains" value="D=1-180"/>
</dbReference>
<dbReference type="PDB" id="7A0R">
    <property type="method" value="X-ray"/>
    <property type="resolution" value="3.30 A"/>
    <property type="chains" value="D=3-179"/>
</dbReference>
<dbReference type="PDB" id="7A0S">
    <property type="method" value="X-ray"/>
    <property type="resolution" value="3.22 A"/>
    <property type="chains" value="D=3-179"/>
</dbReference>
<dbReference type="PDB" id="7A18">
    <property type="method" value="X-ray"/>
    <property type="resolution" value="3.40 A"/>
    <property type="chains" value="D=2-177"/>
</dbReference>
<dbReference type="PDBsum" id="1NKW"/>
<dbReference type="PDBsum" id="1NWX"/>
<dbReference type="PDBsum" id="1NWY"/>
<dbReference type="PDBsum" id="1SM1"/>
<dbReference type="PDBsum" id="1XBP"/>
<dbReference type="PDBsum" id="2ZJP"/>
<dbReference type="PDBsum" id="2ZJQ"/>
<dbReference type="PDBsum" id="2ZJR"/>
<dbReference type="PDBsum" id="3CF5"/>
<dbReference type="PDBsum" id="3DLL"/>
<dbReference type="PDBsum" id="3PIO"/>
<dbReference type="PDBsum" id="3PIP"/>
<dbReference type="PDBsum" id="4IO9"/>
<dbReference type="PDBsum" id="4IOA"/>
<dbReference type="PDBsum" id="4IOC"/>
<dbReference type="PDBsum" id="4U67"/>
<dbReference type="PDBsum" id="4V49"/>
<dbReference type="PDBsum" id="4V4A"/>
<dbReference type="PDBsum" id="4V4G"/>
<dbReference type="PDBsum" id="4WFN"/>
<dbReference type="PDBsum" id="5DM6"/>
<dbReference type="PDBsum" id="5DM7"/>
<dbReference type="PDBsum" id="5JVG"/>
<dbReference type="PDBsum" id="5JVH"/>
<dbReference type="PDBsum" id="7A0R"/>
<dbReference type="PDBsum" id="7A0S"/>
<dbReference type="PDBsum" id="7A18"/>
<dbReference type="SMR" id="Q9RXJ0"/>
<dbReference type="FunCoup" id="Q9RXJ0">
    <property type="interactions" value="465"/>
</dbReference>
<dbReference type="IntAct" id="Q9RXJ0">
    <property type="interactions" value="1"/>
</dbReference>
<dbReference type="STRING" id="243230.DR_0323"/>
<dbReference type="PaxDb" id="243230-DR_0323"/>
<dbReference type="EnsemblBacteria" id="AAF09904">
    <property type="protein sequence ID" value="AAF09904"/>
    <property type="gene ID" value="DR_0323"/>
</dbReference>
<dbReference type="GeneID" id="69516555"/>
<dbReference type="KEGG" id="dra:DR_0323"/>
<dbReference type="PATRIC" id="fig|243230.17.peg.489"/>
<dbReference type="eggNOG" id="COG0094">
    <property type="taxonomic scope" value="Bacteria"/>
</dbReference>
<dbReference type="HOGENOM" id="CLU_061015_2_1_0"/>
<dbReference type="InParanoid" id="Q9RXJ0"/>
<dbReference type="OrthoDB" id="9806626at2"/>
<dbReference type="EvolutionaryTrace" id="Q9RXJ0"/>
<dbReference type="Proteomes" id="UP000002524">
    <property type="component" value="Chromosome 1"/>
</dbReference>
<dbReference type="GO" id="GO:0022625">
    <property type="term" value="C:cytosolic large ribosomal subunit"/>
    <property type="evidence" value="ECO:0000318"/>
    <property type="project" value="GO_Central"/>
</dbReference>
<dbReference type="GO" id="GO:0003723">
    <property type="term" value="F:RNA binding"/>
    <property type="evidence" value="ECO:0000318"/>
    <property type="project" value="GO_Central"/>
</dbReference>
<dbReference type="GO" id="GO:0019843">
    <property type="term" value="F:rRNA binding"/>
    <property type="evidence" value="ECO:0007669"/>
    <property type="project" value="UniProtKB-UniRule"/>
</dbReference>
<dbReference type="GO" id="GO:0003735">
    <property type="term" value="F:structural constituent of ribosome"/>
    <property type="evidence" value="ECO:0000318"/>
    <property type="project" value="GO_Central"/>
</dbReference>
<dbReference type="GO" id="GO:0000049">
    <property type="term" value="F:tRNA binding"/>
    <property type="evidence" value="ECO:0007669"/>
    <property type="project" value="UniProtKB-UniRule"/>
</dbReference>
<dbReference type="GO" id="GO:0006412">
    <property type="term" value="P:translation"/>
    <property type="evidence" value="ECO:0000318"/>
    <property type="project" value="GO_Central"/>
</dbReference>
<dbReference type="FunFam" id="3.30.1440.10:FF:000001">
    <property type="entry name" value="50S ribosomal protein L5"/>
    <property type="match status" value="1"/>
</dbReference>
<dbReference type="Gene3D" id="3.30.1440.10">
    <property type="match status" value="1"/>
</dbReference>
<dbReference type="HAMAP" id="MF_01333_B">
    <property type="entry name" value="Ribosomal_uL5_B"/>
    <property type="match status" value="1"/>
</dbReference>
<dbReference type="InterPro" id="IPR002132">
    <property type="entry name" value="Ribosomal_uL5"/>
</dbReference>
<dbReference type="InterPro" id="IPR020930">
    <property type="entry name" value="Ribosomal_uL5_bac-type"/>
</dbReference>
<dbReference type="InterPro" id="IPR031309">
    <property type="entry name" value="Ribosomal_uL5_C"/>
</dbReference>
<dbReference type="InterPro" id="IPR022803">
    <property type="entry name" value="Ribosomal_uL5_dom_sf"/>
</dbReference>
<dbReference type="InterPro" id="IPR031310">
    <property type="entry name" value="Ribosomal_uL5_N"/>
</dbReference>
<dbReference type="NCBIfam" id="NF000585">
    <property type="entry name" value="PRK00010.1"/>
    <property type="match status" value="1"/>
</dbReference>
<dbReference type="PANTHER" id="PTHR11994">
    <property type="entry name" value="60S RIBOSOMAL PROTEIN L11-RELATED"/>
    <property type="match status" value="1"/>
</dbReference>
<dbReference type="Pfam" id="PF00281">
    <property type="entry name" value="Ribosomal_L5"/>
    <property type="match status" value="1"/>
</dbReference>
<dbReference type="Pfam" id="PF00673">
    <property type="entry name" value="Ribosomal_L5_C"/>
    <property type="match status" value="1"/>
</dbReference>
<dbReference type="PIRSF" id="PIRSF002161">
    <property type="entry name" value="Ribosomal_L5"/>
    <property type="match status" value="1"/>
</dbReference>
<dbReference type="SUPFAM" id="SSF55282">
    <property type="entry name" value="RL5-like"/>
    <property type="match status" value="1"/>
</dbReference>
<keyword id="KW-0002">3D-structure</keyword>
<keyword id="KW-0903">Direct protein sequencing</keyword>
<keyword id="KW-1185">Reference proteome</keyword>
<keyword id="KW-0687">Ribonucleoprotein</keyword>
<keyword id="KW-0689">Ribosomal protein</keyword>
<keyword id="KW-0694">RNA-binding</keyword>
<keyword id="KW-0699">rRNA-binding</keyword>
<keyword id="KW-0820">tRNA-binding</keyword>
<name>RL5_DEIRA</name>
<comment type="function">
    <text evidence="1">This is one of the proteins that bind and probably mediate the attachment of the 5S RNA into the large ribosomal subunit, where it forms part of the central protuberance. In the 70S ribosome it contacts protein S13 of the 30S subunit (bridge B1b), connecting the 2 subunits; this bridge is implicated in subunit movement (By similarity). Contacts the P site tRNA; the 5S rRNA and some of its associated proteins might help stabilize positioning of ribosome-bound tRNAs.</text>
</comment>
<comment type="subunit">
    <text evidence="1 2 3 4 5 6 7">Forms a bridge to the 30S subunit in the 70S ribosome (By similarity). Part of the 50S ribosomal subunit; part of the 5S rRNA/L5/L18/L25 (CTC) subcomplex. Is known to contact the 5S rRNA, 23S rRNA and the P site tRNA.</text>
</comment>
<comment type="similarity">
    <text evidence="8">Belongs to the universal ribosomal protein uL5 family.</text>
</comment>